<gene>
    <name evidence="1" type="primary">NP</name>
</gene>
<accession>Q809S7</accession>
<organismHost>
    <name type="scientific">Aves</name>
    <dbReference type="NCBI Taxonomy" id="8782"/>
</organismHost>
<organismHost>
    <name type="scientific">Felis catus</name>
    <name type="common">Cat</name>
    <name type="synonym">Felis silvestris catus</name>
    <dbReference type="NCBI Taxonomy" id="9685"/>
</organismHost>
<organismHost>
    <name type="scientific">Homo sapiens</name>
    <name type="common">Human</name>
    <dbReference type="NCBI Taxonomy" id="9606"/>
</organismHost>
<organismHost>
    <name type="scientific">Panthera pardus</name>
    <name type="common">Leopard</name>
    <name type="synonym">Felis pardus</name>
    <dbReference type="NCBI Taxonomy" id="9691"/>
</organismHost>
<organismHost>
    <name type="scientific">Panthera tigris</name>
    <name type="common">Tiger</name>
    <dbReference type="NCBI Taxonomy" id="9694"/>
</organismHost>
<organismHost>
    <name type="scientific">Sus scrofa</name>
    <name type="common">Pig</name>
    <dbReference type="NCBI Taxonomy" id="9823"/>
</organismHost>
<comment type="function">
    <text evidence="1">Encapsidates the negative strand viral RNA, protecting it from nucleases. The encapsidated genomic RNA is termed the ribonucleoprotein (RNP) and serves as template for transcription and replication. The RNP needs to be localized in the host nucleus to start an infectious cycle, but is too large to diffuse through the nuclear pore complex. NP comprises at least 2 nuclear localization signals that are responsible for the active RNP import into the nucleus through cellular importin alpha/beta pathway. Later in the infection, nclear export of RNPs are mediated through viral proteins NEP interacting with M1 which binds nucleoproteins. It is possible that nucleoprotein binds directly host exportin-1/XPO1 and plays an active role in RNPs nuclear export. M1 interaction with RNP seems to hide nucleoprotein's nuclear localization signals. Soon after a virion infects a new cell, M1 dissociates from the RNP under acidification of the virion driven by M2 protein. Dissociation of M1 from RNP unmasks nucleoprotein's nuclear localization signals, targeting the RNP to the nucleus.</text>
</comment>
<comment type="subunit">
    <text evidence="1">Homomultimerizes to form the nucleocapsid. May bind host exportin-1/XPO1. Binds to viral genomic RNA. Protein-RNA contacts are mediated by a combination of electrostatic interactions between positively charged residues and the phosphate backbone and planar interactions between aromatic side chains and bases.</text>
</comment>
<comment type="subcellular location">
    <subcellularLocation>
        <location evidence="1">Virion</location>
    </subcellularLocation>
    <subcellularLocation>
        <location evidence="1">Host nucleus</location>
    </subcellularLocation>
</comment>
<comment type="PTM">
    <text evidence="1">Late in virus-infected cells, may be cleaved from a 56-kDa protein to a 53-kDa protein by a cellular caspase. This cleavage might be a marker for the onset of apoptosis in infected cells or have a specific function in virus host interaction.</text>
</comment>
<comment type="similarity">
    <text evidence="1">Belongs to the influenza viruses nucleoprotein family.</text>
</comment>
<dbReference type="EMBL" id="AF509120">
    <property type="protein sequence ID" value="AAO52963.1"/>
    <property type="molecule type" value="Genomic_DNA"/>
</dbReference>
<dbReference type="SMR" id="Q809S7"/>
<dbReference type="GO" id="GO:0019029">
    <property type="term" value="C:helical viral capsid"/>
    <property type="evidence" value="ECO:0007669"/>
    <property type="project" value="UniProtKB-UniRule"/>
</dbReference>
<dbReference type="GO" id="GO:0043657">
    <property type="term" value="C:host cell"/>
    <property type="evidence" value="ECO:0007669"/>
    <property type="project" value="GOC"/>
</dbReference>
<dbReference type="GO" id="GO:0042025">
    <property type="term" value="C:host cell nucleus"/>
    <property type="evidence" value="ECO:0007669"/>
    <property type="project" value="UniProtKB-SubCell"/>
</dbReference>
<dbReference type="GO" id="GO:1990904">
    <property type="term" value="C:ribonucleoprotein complex"/>
    <property type="evidence" value="ECO:0007669"/>
    <property type="project" value="UniProtKB-KW"/>
</dbReference>
<dbReference type="GO" id="GO:0019013">
    <property type="term" value="C:viral nucleocapsid"/>
    <property type="evidence" value="ECO:0007669"/>
    <property type="project" value="UniProtKB-UniRule"/>
</dbReference>
<dbReference type="GO" id="GO:0003723">
    <property type="term" value="F:RNA binding"/>
    <property type="evidence" value="ECO:0007669"/>
    <property type="project" value="UniProtKB-UniRule"/>
</dbReference>
<dbReference type="GO" id="GO:0005198">
    <property type="term" value="F:structural molecule activity"/>
    <property type="evidence" value="ECO:0007669"/>
    <property type="project" value="UniProtKB-UniRule"/>
</dbReference>
<dbReference type="GO" id="GO:0046718">
    <property type="term" value="P:symbiont entry into host cell"/>
    <property type="evidence" value="ECO:0007669"/>
    <property type="project" value="UniProtKB-KW"/>
</dbReference>
<dbReference type="GO" id="GO:0075732">
    <property type="term" value="P:viral penetration into host nucleus"/>
    <property type="evidence" value="ECO:0007669"/>
    <property type="project" value="UniProtKB-UniRule"/>
</dbReference>
<dbReference type="HAMAP" id="MF_04070">
    <property type="entry name" value="INFV_NCAP"/>
    <property type="match status" value="1"/>
</dbReference>
<dbReference type="InterPro" id="IPR002141">
    <property type="entry name" value="Flu_NP"/>
</dbReference>
<dbReference type="Pfam" id="PF00506">
    <property type="entry name" value="Flu_NP"/>
    <property type="match status" value="1"/>
</dbReference>
<dbReference type="SUPFAM" id="SSF161003">
    <property type="entry name" value="flu NP-like"/>
    <property type="match status" value="1"/>
</dbReference>
<keyword id="KW-0167">Capsid protein</keyword>
<keyword id="KW-1139">Helical capsid protein</keyword>
<keyword id="KW-1048">Host nucleus</keyword>
<keyword id="KW-0945">Host-virus interaction</keyword>
<keyword id="KW-0687">Ribonucleoprotein</keyword>
<keyword id="KW-0694">RNA-binding</keyword>
<keyword id="KW-0543">Viral nucleoprotein</keyword>
<keyword id="KW-1163">Viral penetration into host nucleus</keyword>
<keyword id="KW-0946">Virion</keyword>
<keyword id="KW-1160">Virus entry into host cell</keyword>
<organism>
    <name type="scientific">Influenza A virus (strain A/Chicken/Hong Kong/FY150/2001 H5N1 genotype D)</name>
    <dbReference type="NCBI Taxonomy" id="222142"/>
    <lineage>
        <taxon>Viruses</taxon>
        <taxon>Riboviria</taxon>
        <taxon>Orthornavirae</taxon>
        <taxon>Negarnaviricota</taxon>
        <taxon>Polyploviricotina</taxon>
        <taxon>Insthoviricetes</taxon>
        <taxon>Articulavirales</taxon>
        <taxon>Orthomyxoviridae</taxon>
        <taxon>Alphainfluenzavirus</taxon>
        <taxon>Alphainfluenzavirus influenzae</taxon>
        <taxon>Influenza A virus</taxon>
    </lineage>
</organism>
<sequence>MALQGTKRSYEQMETGGERQNATEIRASVGRMVGGIGRFYIQMCTELKLSDYEGRLIQNSITIERMVLSAFDERRNRYLEENPSAGKDPKKTGGPIYKRREGKWVRELILYDKEEIRRIWRQANNGEDATAGLTHLMIWHSNLNDATYQRTRALVRTGMDPRMCSLMQGSTLPRRSGAAGAAVKGIGTMVMELIRMIKRGINDRNFWRGDNGRKTRIAYERMCNILKGKFQTAAQRAMMDQVRESRNPGNAEIEDLIFLARSALILRGSVAHKSCLPACVYGLAVASGYDFEREGYSLVGIDPFRLLQNSQVFSLIRSNENPAHKSQLVWMACHSAAFEDLRVSSFIRGTRVIPRGQLSTRGVQIASNENMETIDSSTLELRSRYWAIRTRSGGNTNQHRASAGQISVQPTFSVQRNLPFERATIMAAFTGNTEGRTSDMRTEIIRMMENAKPEDVSFQGRGVFELSDEKATNPIVPSFDMSNEGSYFFGDNAEEYDN</sequence>
<proteinExistence type="inferred from homology"/>
<name>NCAP_I01A2</name>
<feature type="chain" id="PRO_0000310917" description="Nucleoprotein">
    <location>
        <begin position="1"/>
        <end position="498"/>
    </location>
</feature>
<feature type="region of interest" description="Disordered" evidence="2">
    <location>
        <begin position="1"/>
        <end position="22"/>
    </location>
</feature>
<feature type="short sequence motif" description="Unconventional nuclear localization signal" evidence="1">
    <location>
        <begin position="1"/>
        <end position="18"/>
    </location>
</feature>
<feature type="short sequence motif" description="Bipartite nuclear localization signal" evidence="1">
    <location>
        <begin position="198"/>
        <end position="216"/>
    </location>
</feature>
<protein>
    <recommendedName>
        <fullName evidence="1">Nucleoprotein</fullName>
    </recommendedName>
    <alternativeName>
        <fullName evidence="1">Nucleocapsid protein</fullName>
        <shortName evidence="1">Protein N</shortName>
    </alternativeName>
</protein>
<evidence type="ECO:0000255" key="1">
    <source>
        <dbReference type="HAMAP-Rule" id="MF_04070"/>
    </source>
</evidence>
<evidence type="ECO:0000256" key="2">
    <source>
        <dbReference type="SAM" id="MobiDB-lite"/>
    </source>
</evidence>
<reference key="1">
    <citation type="journal article" date="2002" name="Proc. Natl. Acad. Sci. U.S.A.">
        <title>Emergence of multiple genotypes of H5N1 avian influenza viruses in Hong Kong SAR.</title>
        <authorList>
            <person name="Guan Y."/>
            <person name="Peiris J.S.M."/>
            <person name="Lipatov A.S."/>
            <person name="Ellis T.M."/>
            <person name="Dyrting K.C."/>
            <person name="Krauss S."/>
            <person name="Zhang L.J."/>
            <person name="Webster R.G."/>
            <person name="Shortridge K.F."/>
        </authorList>
    </citation>
    <scope>NUCLEOTIDE SEQUENCE [GENOMIC RNA]</scope>
</reference>